<reference key="1">
    <citation type="submission" date="2008-10" db="EMBL/GenBank/DDBJ databases">
        <title>Genome sequence of Bacillus cereus G9842.</title>
        <authorList>
            <person name="Dodson R.J."/>
            <person name="Durkin A.S."/>
            <person name="Rosovitz M.J."/>
            <person name="Rasko D.A."/>
            <person name="Hoffmaster A."/>
            <person name="Ravel J."/>
            <person name="Sutton G."/>
        </authorList>
    </citation>
    <scope>NUCLEOTIDE SEQUENCE [LARGE SCALE GENOMIC DNA]</scope>
    <source>
        <strain>G9842</strain>
    </source>
</reference>
<proteinExistence type="inferred from homology"/>
<name>HUTP_BACC2</name>
<evidence type="ECO:0000255" key="1">
    <source>
        <dbReference type="HAMAP-Rule" id="MF_00779"/>
    </source>
</evidence>
<feature type="chain" id="PRO_1000148460" description="Hut operon positive regulatory protein">
    <location>
        <begin position="1"/>
        <end position="146"/>
    </location>
</feature>
<gene>
    <name evidence="1" type="primary">hutP</name>
    <name type="ordered locus">BCG9842_B1555</name>
</gene>
<keyword id="KW-0010">Activator</keyword>
<keyword id="KW-0369">Histidine metabolism</keyword>
<keyword id="KW-0694">RNA-binding</keyword>
<keyword id="KW-0804">Transcription</keyword>
<keyword id="KW-0805">Transcription regulation</keyword>
<protein>
    <recommendedName>
        <fullName evidence="1">Hut operon positive regulatory protein</fullName>
    </recommendedName>
</protein>
<dbReference type="EMBL" id="CP001186">
    <property type="protein sequence ID" value="ACK96817.1"/>
    <property type="molecule type" value="Genomic_DNA"/>
</dbReference>
<dbReference type="RefSeq" id="WP_000926515.1">
    <property type="nucleotide sequence ID" value="NC_011772.1"/>
</dbReference>
<dbReference type="SMR" id="B7ISJ3"/>
<dbReference type="KEGG" id="bcg:BCG9842_B1555"/>
<dbReference type="HOGENOM" id="CLU_148478_0_0_9"/>
<dbReference type="Proteomes" id="UP000006744">
    <property type="component" value="Chromosome"/>
</dbReference>
<dbReference type="GO" id="GO:0003729">
    <property type="term" value="F:mRNA binding"/>
    <property type="evidence" value="ECO:0007669"/>
    <property type="project" value="UniProtKB-UniRule"/>
</dbReference>
<dbReference type="GO" id="GO:0006547">
    <property type="term" value="P:L-histidine metabolic process"/>
    <property type="evidence" value="ECO:0007669"/>
    <property type="project" value="UniProtKB-UniRule"/>
</dbReference>
<dbReference type="GO" id="GO:0010628">
    <property type="term" value="P:positive regulation of gene expression"/>
    <property type="evidence" value="ECO:0007669"/>
    <property type="project" value="UniProtKB-UniRule"/>
</dbReference>
<dbReference type="FunFam" id="3.40.1510.10:FF:000001">
    <property type="entry name" value="Hut operon positive regulatory protein"/>
    <property type="match status" value="1"/>
</dbReference>
<dbReference type="Gene3D" id="3.40.1510.10">
    <property type="entry name" value="Hut operon regulatory protein HutP"/>
    <property type="match status" value="1"/>
</dbReference>
<dbReference type="HAMAP" id="MF_00779">
    <property type="entry name" value="HutP"/>
    <property type="match status" value="1"/>
</dbReference>
<dbReference type="InterPro" id="IPR015111">
    <property type="entry name" value="Regulatory_HutP"/>
</dbReference>
<dbReference type="InterPro" id="IPR023552">
    <property type="entry name" value="Regulatory_HutP_bacillales"/>
</dbReference>
<dbReference type="InterPro" id="IPR036482">
    <property type="entry name" value="Regulatory_HutP_sf"/>
</dbReference>
<dbReference type="NCBIfam" id="NF002838">
    <property type="entry name" value="PRK03065.1"/>
    <property type="match status" value="1"/>
</dbReference>
<dbReference type="Pfam" id="PF09021">
    <property type="entry name" value="HutP"/>
    <property type="match status" value="1"/>
</dbReference>
<dbReference type="SUPFAM" id="SSF111064">
    <property type="entry name" value="Hut operon positive regulatory protein HutP"/>
    <property type="match status" value="1"/>
</dbReference>
<comment type="function">
    <text evidence="1">Antiterminator that binds to cis-acting regulatory sequences on the mRNA in the presence of histidine, thereby suppressing transcription termination and activating the hut operon for histidine utilization.</text>
</comment>
<comment type="subunit">
    <text evidence="1">Homohexamer.</text>
</comment>
<comment type="similarity">
    <text evidence="1">Belongs to the HutP family.</text>
</comment>
<organism>
    <name type="scientific">Bacillus cereus (strain G9842)</name>
    <dbReference type="NCBI Taxonomy" id="405531"/>
    <lineage>
        <taxon>Bacteria</taxon>
        <taxon>Bacillati</taxon>
        <taxon>Bacillota</taxon>
        <taxon>Bacilli</taxon>
        <taxon>Bacillales</taxon>
        <taxon>Bacillaceae</taxon>
        <taxon>Bacillus</taxon>
        <taxon>Bacillus cereus group</taxon>
    </lineage>
</organism>
<accession>B7ISJ3</accession>
<sequence>MLLQGTHRIGRMAMLLALADENESPVLSIPKGWKYCTGKVGSMNSQKVVAAMETAAKSNQVIETDVYRETHALYHAIMEALYGVTRGQIQLADVLRTVGLRFAIVRGRPYDGKKEGEWVAVALYGTIGAPVKGSEHEAIGLGINHI</sequence>